<organism>
    <name type="scientific">Escherichia coli (strain ATCC 8739 / DSM 1576 / NBRC 3972 / NCIMB 8545 / WDCM 00012 / Crooks)</name>
    <dbReference type="NCBI Taxonomy" id="481805"/>
    <lineage>
        <taxon>Bacteria</taxon>
        <taxon>Pseudomonadati</taxon>
        <taxon>Pseudomonadota</taxon>
        <taxon>Gammaproteobacteria</taxon>
        <taxon>Enterobacterales</taxon>
        <taxon>Enterobacteriaceae</taxon>
        <taxon>Escherichia</taxon>
    </lineage>
</organism>
<proteinExistence type="inferred from homology"/>
<comment type="function">
    <text evidence="1">Associates with aggregated proteins, together with IbpA, to stabilize and protect them from irreversible denaturation and extensive proteolysis during heat shock and oxidative stress. Aggregated proteins bound to the IbpAB complex are more efficiently refolded and reactivated by the ATP-dependent chaperone systems ClpB and DnaK/DnaJ/GrpE. Its activity is ATP-independent.</text>
</comment>
<comment type="subunit">
    <text evidence="1">Homodimer. Forms homomultimers of about 100-150 subunits at optimal growth temperatures. Conformation changes to oligomers at high temperatures or high ionic concentrations. The decrease in size of the multimers is accompanied by an increase in chaperone activity.</text>
</comment>
<comment type="subcellular location">
    <subcellularLocation>
        <location evidence="1">Cytoplasm</location>
    </subcellularLocation>
</comment>
<comment type="domain">
    <text evidence="1">The N- and C-terminal flexible termini are involved in oligomerization and in the binding of non-native substrate proteins, and are essential for chaperone activity.</text>
</comment>
<comment type="similarity">
    <text evidence="1 2">Belongs to the small heat shock protein (HSP20) family.</text>
</comment>
<dbReference type="EMBL" id="CP000946">
    <property type="protein sequence ID" value="ACA75705.1"/>
    <property type="molecule type" value="Genomic_DNA"/>
</dbReference>
<dbReference type="RefSeq" id="WP_001243431.1">
    <property type="nucleotide sequence ID" value="NZ_MTFT01000013.1"/>
</dbReference>
<dbReference type="SMR" id="B1IYQ8"/>
<dbReference type="GeneID" id="93778427"/>
<dbReference type="KEGG" id="ecl:EcolC_0017"/>
<dbReference type="HOGENOM" id="CLU_046737_4_2_6"/>
<dbReference type="GO" id="GO:0005737">
    <property type="term" value="C:cytoplasm"/>
    <property type="evidence" value="ECO:0007669"/>
    <property type="project" value="UniProtKB-SubCell"/>
</dbReference>
<dbReference type="GO" id="GO:0050821">
    <property type="term" value="P:protein stabilization"/>
    <property type="evidence" value="ECO:0007669"/>
    <property type="project" value="UniProtKB-UniRule"/>
</dbReference>
<dbReference type="CDD" id="cd06470">
    <property type="entry name" value="ACD_IbpA-B_like"/>
    <property type="match status" value="1"/>
</dbReference>
<dbReference type="FunFam" id="2.60.40.790:FF:000005">
    <property type="entry name" value="Small heat shock protein IbpB"/>
    <property type="match status" value="1"/>
</dbReference>
<dbReference type="Gene3D" id="2.60.40.790">
    <property type="match status" value="1"/>
</dbReference>
<dbReference type="HAMAP" id="MF_02001">
    <property type="entry name" value="HSP20_IbpB"/>
    <property type="match status" value="1"/>
</dbReference>
<dbReference type="InterPro" id="IPR002068">
    <property type="entry name" value="A-crystallin/Hsp20_dom"/>
</dbReference>
<dbReference type="InterPro" id="IPR037913">
    <property type="entry name" value="ACD_IbpA/B"/>
</dbReference>
<dbReference type="InterPro" id="IPR008978">
    <property type="entry name" value="HSP20-like_chaperone"/>
</dbReference>
<dbReference type="InterPro" id="IPR022848">
    <property type="entry name" value="HSP20_IbpB"/>
</dbReference>
<dbReference type="NCBIfam" id="NF008618">
    <property type="entry name" value="PRK11597.1"/>
    <property type="match status" value="1"/>
</dbReference>
<dbReference type="PANTHER" id="PTHR47062">
    <property type="match status" value="1"/>
</dbReference>
<dbReference type="PANTHER" id="PTHR47062:SF2">
    <property type="entry name" value="SMALL HEAT SHOCK PROTEIN IBPB"/>
    <property type="match status" value="1"/>
</dbReference>
<dbReference type="Pfam" id="PF00011">
    <property type="entry name" value="HSP20"/>
    <property type="match status" value="1"/>
</dbReference>
<dbReference type="SUPFAM" id="SSF49764">
    <property type="entry name" value="HSP20-like chaperones"/>
    <property type="match status" value="1"/>
</dbReference>
<dbReference type="PROSITE" id="PS01031">
    <property type="entry name" value="SHSP"/>
    <property type="match status" value="1"/>
</dbReference>
<gene>
    <name evidence="1" type="primary">ibpB</name>
    <name type="ordered locus">EcolC_0017</name>
</gene>
<keyword id="KW-0143">Chaperone</keyword>
<keyword id="KW-0963">Cytoplasm</keyword>
<keyword id="KW-0346">Stress response</keyword>
<protein>
    <recommendedName>
        <fullName evidence="1">Small heat shock protein IbpB</fullName>
    </recommendedName>
    <alternativeName>
        <fullName evidence="1">16 kDa heat shock protein B</fullName>
    </alternativeName>
</protein>
<feature type="chain" id="PRO_1000088539" description="Small heat shock protein IbpB">
    <location>
        <begin position="1"/>
        <end position="142"/>
    </location>
</feature>
<feature type="domain" description="sHSP" evidence="2">
    <location>
        <begin position="26"/>
        <end position="137"/>
    </location>
</feature>
<accession>B1IYQ8</accession>
<reference key="1">
    <citation type="submission" date="2008-02" db="EMBL/GenBank/DDBJ databases">
        <title>Complete sequence of Escherichia coli C str. ATCC 8739.</title>
        <authorList>
            <person name="Copeland A."/>
            <person name="Lucas S."/>
            <person name="Lapidus A."/>
            <person name="Glavina del Rio T."/>
            <person name="Dalin E."/>
            <person name="Tice H."/>
            <person name="Bruce D."/>
            <person name="Goodwin L."/>
            <person name="Pitluck S."/>
            <person name="Kiss H."/>
            <person name="Brettin T."/>
            <person name="Detter J.C."/>
            <person name="Han C."/>
            <person name="Kuske C.R."/>
            <person name="Schmutz J."/>
            <person name="Larimer F."/>
            <person name="Land M."/>
            <person name="Hauser L."/>
            <person name="Kyrpides N."/>
            <person name="Mikhailova N."/>
            <person name="Ingram L."/>
            <person name="Richardson P."/>
        </authorList>
    </citation>
    <scope>NUCLEOTIDE SEQUENCE [LARGE SCALE GENOMIC DNA]</scope>
    <source>
        <strain>ATCC 8739 / DSM 1576 / NBRC 3972 / NCIMB 8545 / WDCM 00012 / Crooks</strain>
    </source>
</reference>
<name>IBPB_ECOLC</name>
<evidence type="ECO:0000255" key="1">
    <source>
        <dbReference type="HAMAP-Rule" id="MF_02001"/>
    </source>
</evidence>
<evidence type="ECO:0000255" key="2">
    <source>
        <dbReference type="PROSITE-ProRule" id="PRU00285"/>
    </source>
</evidence>
<sequence>MRNFDLSPLMRQWIGFDKLANALQNAGESQSFPPYNIEKSDDNHYRITLALAGFRQEDLEIQLEGTRLSVKGTPEQPKEEKKWLHQGLMNQPFSLSFTLAENMEVSGATFVNGLLHIDLIRNEPEPIAAQRIAISERPALNS</sequence>